<keyword id="KW-0002">3D-structure</keyword>
<keyword id="KW-0025">Alternative splicing</keyword>
<keyword id="KW-0175">Coiled coil</keyword>
<keyword id="KW-0963">Cytoplasm</keyword>
<keyword id="KW-0597">Phosphoprotein</keyword>
<keyword id="KW-1267">Proteomics identification</keyword>
<keyword id="KW-1185">Reference proteome</keyword>
<dbReference type="EMBL" id="AJ347750">
    <property type="protein sequence ID" value="CAC87939.1"/>
    <property type="molecule type" value="mRNA"/>
</dbReference>
<dbReference type="EMBL" id="AF268032">
    <property type="protein sequence ID" value="AAK58588.1"/>
    <property type="molecule type" value="mRNA"/>
</dbReference>
<dbReference type="EMBL" id="AF423421">
    <property type="protein sequence ID" value="AAQ04062.1"/>
    <property type="molecule type" value="mRNA"/>
</dbReference>
<dbReference type="EMBL" id="AK095001">
    <property type="protein sequence ID" value="BAC04471.1"/>
    <property type="molecule type" value="mRNA"/>
</dbReference>
<dbReference type="EMBL" id="AK098246">
    <property type="protein sequence ID" value="BAG53600.1"/>
    <property type="molecule type" value="mRNA"/>
</dbReference>
<dbReference type="EMBL" id="AK300775">
    <property type="protein sequence ID" value="BAG62439.1"/>
    <property type="molecule type" value="mRNA"/>
</dbReference>
<dbReference type="EMBL" id="AK315105">
    <property type="protein sequence ID" value="BAG37565.1"/>
    <property type="molecule type" value="mRNA"/>
</dbReference>
<dbReference type="EMBL" id="AC008521">
    <property type="status" value="NOT_ANNOTATED_CDS"/>
    <property type="molecule type" value="Genomic_DNA"/>
</dbReference>
<dbReference type="EMBL" id="AC011449">
    <property type="status" value="NOT_ANNOTATED_CDS"/>
    <property type="molecule type" value="Genomic_DNA"/>
</dbReference>
<dbReference type="EMBL" id="AC093069">
    <property type="status" value="NOT_ANNOTATED_CDS"/>
    <property type="molecule type" value="Genomic_DNA"/>
</dbReference>
<dbReference type="EMBL" id="BC036447">
    <property type="protein sequence ID" value="AAH36447.1"/>
    <property type="molecule type" value="mRNA"/>
</dbReference>
<dbReference type="EMBL" id="AL831950">
    <property type="protein sequence ID" value="CAD38597.1"/>
    <property type="molecule type" value="mRNA"/>
</dbReference>
<dbReference type="CCDS" id="CCDS12427.1">
    <molecule id="Q8IUC4-1"/>
</dbReference>
<dbReference type="RefSeq" id="NP_149094.3">
    <molecule id="Q8IUC4-1"/>
    <property type="nucleotide sequence ID" value="NM_033103.4"/>
</dbReference>
<dbReference type="PDB" id="2VSV">
    <property type="method" value="X-ray"/>
    <property type="resolution" value="1.82 A"/>
    <property type="chains" value="A/B=514-595"/>
</dbReference>
<dbReference type="PDBsum" id="2VSV"/>
<dbReference type="SMR" id="Q8IUC4"/>
<dbReference type="BioGRID" id="124521">
    <property type="interactions" value="39"/>
</dbReference>
<dbReference type="FunCoup" id="Q8IUC4">
    <property type="interactions" value="1005"/>
</dbReference>
<dbReference type="IntAct" id="Q8IUC4">
    <property type="interactions" value="17"/>
</dbReference>
<dbReference type="MINT" id="Q8IUC4"/>
<dbReference type="STRING" id="9606.ENSP00000254260"/>
<dbReference type="iPTMnet" id="Q8IUC4"/>
<dbReference type="PhosphoSitePlus" id="Q8IUC4"/>
<dbReference type="SwissPalm" id="Q8IUC4"/>
<dbReference type="BioMuta" id="RHPN2"/>
<dbReference type="DMDM" id="62288912"/>
<dbReference type="jPOST" id="Q8IUC4"/>
<dbReference type="MassIVE" id="Q8IUC4"/>
<dbReference type="PaxDb" id="9606-ENSP00000254260"/>
<dbReference type="PeptideAtlas" id="Q8IUC4"/>
<dbReference type="ProteomicsDB" id="5211"/>
<dbReference type="ProteomicsDB" id="70543">
    <molecule id="Q8IUC4-1"/>
</dbReference>
<dbReference type="Pumba" id="Q8IUC4"/>
<dbReference type="Antibodypedia" id="28974">
    <property type="antibodies" value="135 antibodies from 30 providers"/>
</dbReference>
<dbReference type="DNASU" id="85415"/>
<dbReference type="Ensembl" id="ENST00000254260.8">
    <molecule id="Q8IUC4-1"/>
    <property type="protein sequence ID" value="ENSP00000254260.2"/>
    <property type="gene ID" value="ENSG00000131941.8"/>
</dbReference>
<dbReference type="GeneID" id="85415"/>
<dbReference type="KEGG" id="hsa:85415"/>
<dbReference type="MANE-Select" id="ENST00000254260.8">
    <property type="protein sequence ID" value="ENSP00000254260.2"/>
    <property type="RefSeq nucleotide sequence ID" value="NM_033103.5"/>
    <property type="RefSeq protein sequence ID" value="NP_149094.3"/>
</dbReference>
<dbReference type="UCSC" id="uc002nuf.4">
    <molecule id="Q8IUC4-1"/>
    <property type="organism name" value="human"/>
</dbReference>
<dbReference type="AGR" id="HGNC:19974"/>
<dbReference type="CTD" id="85415"/>
<dbReference type="DisGeNET" id="85415"/>
<dbReference type="GeneCards" id="RHPN2"/>
<dbReference type="HGNC" id="HGNC:19974">
    <property type="gene designation" value="RHPN2"/>
</dbReference>
<dbReference type="HPA" id="ENSG00000131941">
    <property type="expression patterns" value="Low tissue specificity"/>
</dbReference>
<dbReference type="MIM" id="617932">
    <property type="type" value="gene"/>
</dbReference>
<dbReference type="neXtProt" id="NX_Q8IUC4"/>
<dbReference type="OpenTargets" id="ENSG00000131941"/>
<dbReference type="PharmGKB" id="PA134979284"/>
<dbReference type="VEuPathDB" id="HostDB:ENSG00000131941"/>
<dbReference type="eggNOG" id="KOG2220">
    <property type="taxonomic scope" value="Eukaryota"/>
</dbReference>
<dbReference type="GeneTree" id="ENSGT00940000153837"/>
<dbReference type="HOGENOM" id="CLU_006514_1_1_1"/>
<dbReference type="InParanoid" id="Q8IUC4"/>
<dbReference type="OMA" id="QAQENVF"/>
<dbReference type="OrthoDB" id="64867at2759"/>
<dbReference type="PAN-GO" id="Q8IUC4">
    <property type="GO annotations" value="1 GO annotation based on evolutionary models"/>
</dbReference>
<dbReference type="PhylomeDB" id="Q8IUC4"/>
<dbReference type="TreeFam" id="TF323502"/>
<dbReference type="PathwayCommons" id="Q8IUC4"/>
<dbReference type="Reactome" id="R-HSA-5666185">
    <property type="pathway name" value="RHO GTPases Activate Rhotekin and Rhophilins"/>
</dbReference>
<dbReference type="Reactome" id="R-HSA-8980692">
    <property type="pathway name" value="RHOA GTPase cycle"/>
</dbReference>
<dbReference type="Reactome" id="R-HSA-9013026">
    <property type="pathway name" value="RHOB GTPase cycle"/>
</dbReference>
<dbReference type="SignaLink" id="Q8IUC4"/>
<dbReference type="BioGRID-ORCS" id="85415">
    <property type="hits" value="18 hits in 1158 CRISPR screens"/>
</dbReference>
<dbReference type="ChiTaRS" id="RHPN2">
    <property type="organism name" value="human"/>
</dbReference>
<dbReference type="EvolutionaryTrace" id="Q8IUC4"/>
<dbReference type="GeneWiki" id="RHPN2"/>
<dbReference type="GenomeRNAi" id="85415"/>
<dbReference type="Pharos" id="Q8IUC4">
    <property type="development level" value="Tbio"/>
</dbReference>
<dbReference type="PRO" id="PR:Q8IUC4"/>
<dbReference type="Proteomes" id="UP000005640">
    <property type="component" value="Chromosome 19"/>
</dbReference>
<dbReference type="RNAct" id="Q8IUC4">
    <property type="molecule type" value="protein"/>
</dbReference>
<dbReference type="Bgee" id="ENSG00000131941">
    <property type="expression patterns" value="Expressed in epithelial cell of pancreas and 144 other cell types or tissues"/>
</dbReference>
<dbReference type="ExpressionAtlas" id="Q8IUC4">
    <property type="expression patterns" value="baseline and differential"/>
</dbReference>
<dbReference type="GO" id="GO:0005829">
    <property type="term" value="C:cytosol"/>
    <property type="evidence" value="ECO:0000304"/>
    <property type="project" value="Reactome"/>
</dbReference>
<dbReference type="GO" id="GO:0048471">
    <property type="term" value="C:perinuclear region of cytoplasm"/>
    <property type="evidence" value="ECO:0007669"/>
    <property type="project" value="UniProtKB-SubCell"/>
</dbReference>
<dbReference type="GO" id="GO:0005886">
    <property type="term" value="C:plasma membrane"/>
    <property type="evidence" value="ECO:0000314"/>
    <property type="project" value="MGI"/>
</dbReference>
<dbReference type="GO" id="GO:0003094">
    <property type="term" value="P:glomerular filtration"/>
    <property type="evidence" value="ECO:0007669"/>
    <property type="project" value="Ensembl"/>
</dbReference>
<dbReference type="GO" id="GO:0051497">
    <property type="term" value="P:negative regulation of stress fiber assembly"/>
    <property type="evidence" value="ECO:0000314"/>
    <property type="project" value="MGI"/>
</dbReference>
<dbReference type="GO" id="GO:0007165">
    <property type="term" value="P:signal transduction"/>
    <property type="evidence" value="ECO:0007669"/>
    <property type="project" value="InterPro"/>
</dbReference>
<dbReference type="CDD" id="cd09249">
    <property type="entry name" value="BRO1_Rhophilin_2"/>
    <property type="match status" value="1"/>
</dbReference>
<dbReference type="CDD" id="cd11634">
    <property type="entry name" value="HR1_Rhophilin-2"/>
    <property type="match status" value="1"/>
</dbReference>
<dbReference type="CDD" id="cd06712">
    <property type="entry name" value="PDZ_rhophilin-like"/>
    <property type="match status" value="1"/>
</dbReference>
<dbReference type="FunFam" id="1.10.287.160:FF:000007">
    <property type="entry name" value="Rhophilin-2"/>
    <property type="match status" value="1"/>
</dbReference>
<dbReference type="FunFam" id="1.25.40.280:FF:000003">
    <property type="entry name" value="RHPN1 isoform 1"/>
    <property type="match status" value="1"/>
</dbReference>
<dbReference type="FunFam" id="2.30.42.10:FF:000160">
    <property type="entry name" value="RHPN1 isoform 1"/>
    <property type="match status" value="1"/>
</dbReference>
<dbReference type="Gene3D" id="2.30.42.10">
    <property type="match status" value="1"/>
</dbReference>
<dbReference type="Gene3D" id="1.25.40.280">
    <property type="entry name" value="alix/aip1 like domains"/>
    <property type="match status" value="1"/>
</dbReference>
<dbReference type="Gene3D" id="1.10.287.160">
    <property type="entry name" value="HR1 repeat"/>
    <property type="match status" value="1"/>
</dbReference>
<dbReference type="InterPro" id="IPR004328">
    <property type="entry name" value="BRO1_dom"/>
</dbReference>
<dbReference type="InterPro" id="IPR038499">
    <property type="entry name" value="BRO1_sf"/>
</dbReference>
<dbReference type="InterPro" id="IPR011072">
    <property type="entry name" value="HR1_rho-bd"/>
</dbReference>
<dbReference type="InterPro" id="IPR036274">
    <property type="entry name" value="HR1_rpt_sf"/>
</dbReference>
<dbReference type="InterPro" id="IPR001478">
    <property type="entry name" value="PDZ"/>
</dbReference>
<dbReference type="InterPro" id="IPR036034">
    <property type="entry name" value="PDZ_sf"/>
</dbReference>
<dbReference type="InterPro" id="IPR049603">
    <property type="entry name" value="Rhophilin-2_HR1"/>
</dbReference>
<dbReference type="InterPro" id="IPR047138">
    <property type="entry name" value="RHPN1_2"/>
</dbReference>
<dbReference type="InterPro" id="IPR047902">
    <property type="entry name" value="RHPN2_BRO1"/>
</dbReference>
<dbReference type="PANTHER" id="PTHR23031">
    <property type="entry name" value="RHOPHILIN"/>
    <property type="match status" value="1"/>
</dbReference>
<dbReference type="PANTHER" id="PTHR23031:SF5">
    <property type="entry name" value="RHOPHILIN-2-RELATED"/>
    <property type="match status" value="1"/>
</dbReference>
<dbReference type="Pfam" id="PF03097">
    <property type="entry name" value="BRO1"/>
    <property type="match status" value="1"/>
</dbReference>
<dbReference type="Pfam" id="PF02185">
    <property type="entry name" value="HR1"/>
    <property type="match status" value="1"/>
</dbReference>
<dbReference type="SMART" id="SM01041">
    <property type="entry name" value="BRO1"/>
    <property type="match status" value="1"/>
</dbReference>
<dbReference type="SMART" id="SM00742">
    <property type="entry name" value="Hr1"/>
    <property type="match status" value="1"/>
</dbReference>
<dbReference type="SMART" id="SM00228">
    <property type="entry name" value="PDZ"/>
    <property type="match status" value="1"/>
</dbReference>
<dbReference type="SUPFAM" id="SSF46585">
    <property type="entry name" value="HR1 repeat"/>
    <property type="match status" value="1"/>
</dbReference>
<dbReference type="SUPFAM" id="SSF50156">
    <property type="entry name" value="PDZ domain-like"/>
    <property type="match status" value="1"/>
</dbReference>
<dbReference type="PROSITE" id="PS51180">
    <property type="entry name" value="BRO1"/>
    <property type="match status" value="1"/>
</dbReference>
<dbReference type="PROSITE" id="PS51860">
    <property type="entry name" value="REM_1"/>
    <property type="match status" value="1"/>
</dbReference>
<name>RHPN2_HUMAN</name>
<sequence length="686" mass="76993">MTDALLPAAPQPLEKENDGYFRKGCNPLAQTGRSKLQNQRAALNQQILKAVRMRTGAENLLKVATNSKVREQVRLELSFVNSDLQMLKEELEGLNISVGVYQNTEEAFTIPLIPLGLKETKDVDFAVVLKDFILEHYSEDGYLYEDEIADLMDLRQACRTPSRDEAGVELLMTYFIQLGFVESRFFPPTRQMGLLFTWYDSLTGVPVSQQNLLLEKASVLFNTGALYTQIGTRCDRQTQAGLESAIDAFQRAAGVLNYLKDTFTHTPSYDMSPAMLSVLVKMMLAQAQESVFEKISLPGIRNEFFMLVKVAQEAAKVGEVYQQLHAAMSQAPVKENIPYSWASLACVKAHHYAALAHYFTAILLIDHQVKPGTDLDHQEKCLSQLYDHMPEGLTPLATLKNDQQRRQLGKSHLRRAMAHHEESVREASLCKKLRSIEVLQKVLCAAQERSRLTYAQHQEEDDLLNLIDAPSVVAKTEQEVDIILPQFSKLTVTDFFQKLGPLSVFSANKRWTPPRSIRFTAEEGDLGFTLRGNAPVQVHFLDPYCSASVAGAREGDYIVSIQLVDCKWLTLSEVMKLLKSFGEDEIEMKVVSLLDSTSSMHNKSATYSVGMQKTYSMICLAIDDDDKTDKTKKISKKLSFLSWGTNKNRQKSASTLCLPSVGAARPQVKKKLPSPFSLLNSDSSWY</sequence>
<proteinExistence type="evidence at protein level"/>
<gene>
    <name type="primary">RHPN2</name>
</gene>
<accession>Q8IUC4</accession>
<accession>B2RCG8</accession>
<accession>B3KUY8</accession>
<accession>B4DUS7</accession>
<accession>Q8N3T7</accession>
<accession>Q8N9D6</accession>
<accession>Q8NE33</accession>
<accession>Q96RU1</accession>
<protein>
    <recommendedName>
        <fullName>Rhophilin-2</fullName>
    </recommendedName>
    <alternativeName>
        <fullName>76 kDa RhoB effector protein</fullName>
    </alternativeName>
    <alternativeName>
        <fullName>GTP-Rho-binding protein 2</fullName>
    </alternativeName>
    <alternativeName>
        <fullName>p76RBE</fullName>
    </alternativeName>
</protein>
<organism>
    <name type="scientific">Homo sapiens</name>
    <name type="common">Human</name>
    <dbReference type="NCBI Taxonomy" id="9606"/>
    <lineage>
        <taxon>Eukaryota</taxon>
        <taxon>Metazoa</taxon>
        <taxon>Chordata</taxon>
        <taxon>Craniata</taxon>
        <taxon>Vertebrata</taxon>
        <taxon>Euteleostomi</taxon>
        <taxon>Mammalia</taxon>
        <taxon>Eutheria</taxon>
        <taxon>Euarchontoglires</taxon>
        <taxon>Primates</taxon>
        <taxon>Haplorrhini</taxon>
        <taxon>Catarrhini</taxon>
        <taxon>Hominidae</taxon>
        <taxon>Homo</taxon>
    </lineage>
</organism>
<feature type="chain" id="PRO_0000218898" description="Rhophilin-2">
    <location>
        <begin position="1"/>
        <end position="686"/>
    </location>
</feature>
<feature type="domain" description="REM-1" evidence="3">
    <location>
        <begin position="26"/>
        <end position="100"/>
    </location>
</feature>
<feature type="domain" description="BRO1" evidence="2">
    <location>
        <begin position="111"/>
        <end position="460"/>
    </location>
</feature>
<feature type="domain" description="PDZ">
    <location>
        <begin position="515"/>
        <end position="593"/>
    </location>
</feature>
<feature type="region of interest" description="Interaction with Rho">
    <location>
        <begin position="46"/>
        <end position="66"/>
    </location>
</feature>
<feature type="modified residue" description="Phosphothreonine" evidence="1">
    <location>
        <position position="655"/>
    </location>
</feature>
<feature type="splice variant" id="VSP_055548" description="In isoform 2." evidence="6">
    <location>
        <begin position="1"/>
        <end position="151"/>
    </location>
</feature>
<feature type="sequence variant" id="VAR_061996" description="In dbSNP:rs28626308." evidence="4">
    <original>R</original>
    <variation>Q</variation>
    <location>
        <position position="70"/>
    </location>
</feature>
<feature type="sequence variant" id="VAR_061997" description="In dbSNP:rs28407794.">
    <original>A</original>
    <variation>P</variation>
    <location>
        <position position="342"/>
    </location>
</feature>
<feature type="mutagenesis site" description="Abolishes interaction with RhoA." evidence="4">
    <original>EN</original>
    <variation>AA</variation>
    <location>
        <begin position="58"/>
        <end position="59"/>
    </location>
</feature>
<feature type="mutagenesis site" description="Does not induce actin disassembly but still interacts with RhoA; when associated with A-526 and A-527." evidence="4">
    <original>R</original>
    <variation>A</variation>
    <location>
        <position position="518"/>
    </location>
</feature>
<feature type="mutagenesis site" description="Does not induce actin disassembly but still interacts with RhoA; when associated with A-518." evidence="4">
    <original>LG</original>
    <variation>AA</variation>
    <location>
        <begin position="526"/>
        <end position="527"/>
    </location>
</feature>
<feature type="sequence conflict" description="In Ref. 6; AAH36447." evidence="7" ref="6">
    <original>E</original>
    <variation>K</variation>
    <location>
        <position position="16"/>
    </location>
</feature>
<feature type="sequence conflict" description="In Ref. 4; BAG53600." evidence="7" ref="4">
    <original>V</original>
    <variation>M</variation>
    <location>
        <position position="51"/>
    </location>
</feature>
<feature type="sequence conflict" description="In Ref. 2; AAK58588." evidence="7" ref="2">
    <original>G</original>
    <variation>D</variation>
    <location>
        <position position="179"/>
    </location>
</feature>
<feature type="sequence conflict" description="In Ref. 2; AAK58588." evidence="7" ref="2">
    <original>VSQQNLLL</original>
    <variation>EPAEPGA</variation>
    <location>
        <begin position="207"/>
        <end position="214"/>
    </location>
</feature>
<feature type="sequence conflict" description="In Ref. 2; AAK58588." evidence="7" ref="2">
    <original>Q</original>
    <variation>E</variation>
    <location>
        <position position="239"/>
    </location>
</feature>
<feature type="sequence conflict" description="In Ref. 2; AAK58588." evidence="7" ref="2">
    <original>D</original>
    <variation>VH</variation>
    <location>
        <position position="261"/>
    </location>
</feature>
<feature type="sequence conflict" description="In Ref. 2; AAK58588." evidence="7" ref="2">
    <original>S</original>
    <variation>C</variation>
    <location>
        <position position="290"/>
    </location>
</feature>
<feature type="sequence conflict" description="In Ref. 2; AAK58588." evidence="7" ref="2">
    <original>A</original>
    <variation>Q</variation>
    <location>
        <position position="326"/>
    </location>
</feature>
<feature type="sequence conflict" description="In Ref. 2; AAK58588." evidence="7" ref="2">
    <original>S</original>
    <variation>L</variation>
    <location>
        <position position="340"/>
    </location>
</feature>
<feature type="sequence conflict" description="In Ref. 4; BAG37565." evidence="7" ref="4">
    <original>E</original>
    <variation>V</variation>
    <location>
        <position position="391"/>
    </location>
</feature>
<feature type="sequence conflict" description="In Ref. 2; AAK58588." evidence="7" ref="2">
    <original>G</original>
    <variation>V</variation>
    <location>
        <position position="392"/>
    </location>
</feature>
<feature type="sequence conflict" description="In Ref. 2; AAK58588." evidence="7" ref="2">
    <original>HLRRAMA</original>
    <variation>TCADHG</variation>
    <location>
        <begin position="412"/>
        <end position="418"/>
    </location>
</feature>
<feature type="sequence conflict" description="In Ref. 9; BAC04471." evidence="7" ref="9">
    <original>M</original>
    <variation>T</variation>
    <location>
        <position position="417"/>
    </location>
</feature>
<feature type="sequence conflict" description="In Ref. 2; AAK58588." evidence="7" ref="2">
    <original>S</original>
    <variation>T</variation>
    <location>
        <position position="435"/>
    </location>
</feature>
<feature type="sequence conflict" description="In Ref. 2; AAK58588." evidence="7" ref="2">
    <original>V</original>
    <variation>A</variation>
    <location>
        <position position="504"/>
    </location>
</feature>
<feature type="sequence conflict" description="In Ref. 2; AAK58588." evidence="7" ref="2">
    <original>P</original>
    <variation>A</variation>
    <location>
        <position position="513"/>
    </location>
</feature>
<feature type="sequence conflict" description="In Ref. 2; AAK58588." evidence="7" ref="2">
    <original>V</original>
    <variation>L</variation>
    <location>
        <position position="549"/>
    </location>
</feature>
<feature type="sequence conflict" description="In Ref. 2; AAK58588." evidence="7" ref="2">
    <original>R</original>
    <variation>K</variation>
    <location>
        <position position="553"/>
    </location>
</feature>
<feature type="sequence conflict" description="In Ref. 2; AAK58588." evidence="7" ref="2">
    <original>L</original>
    <variation>G</variation>
    <location>
        <position position="563"/>
    </location>
</feature>
<feature type="sequence conflict" description="In Ref. 2; AAK58588." evidence="7" ref="2">
    <original>L</original>
    <variation>V</variation>
    <location>
        <position position="571"/>
    </location>
</feature>
<feature type="sequence conflict" description="In Ref. 2; AAK58588." evidence="7" ref="2">
    <original>E</original>
    <variation>R</variation>
    <location>
        <position position="583"/>
    </location>
</feature>
<feature type="sequence conflict" description="In Ref. 9; BAC04471." evidence="7" ref="9">
    <original>S</original>
    <variation>P</variation>
    <location>
        <position position="598"/>
    </location>
</feature>
<feature type="sequence conflict" description="In Ref. 4; BAG37565." evidence="7" ref="4">
    <original>M</original>
    <variation>T</variation>
    <location>
        <position position="600"/>
    </location>
</feature>
<feature type="sequence conflict" description="In Ref. 2; AAK58588." evidence="7" ref="2">
    <original>D</original>
    <variation>N</variation>
    <location>
        <position position="626"/>
    </location>
</feature>
<feature type="sequence conflict" description="In Ref. 2; AAK58588." evidence="7" ref="2">
    <original>N</original>
    <variation>T</variation>
    <location>
        <position position="646"/>
    </location>
</feature>
<feature type="strand" evidence="8">
    <location>
        <begin position="515"/>
        <end position="519"/>
    </location>
</feature>
<feature type="helix" evidence="8">
    <location>
        <begin position="522"/>
        <end position="524"/>
    </location>
</feature>
<feature type="strand" evidence="8">
    <location>
        <begin position="528"/>
        <end position="535"/>
    </location>
</feature>
<feature type="strand" evidence="8">
    <location>
        <begin position="537"/>
        <end position="541"/>
    </location>
</feature>
<feature type="helix" evidence="8">
    <location>
        <begin position="546"/>
        <end position="549"/>
    </location>
</feature>
<feature type="strand" evidence="8">
    <location>
        <begin position="557"/>
        <end position="561"/>
    </location>
</feature>
<feature type="helix" evidence="8">
    <location>
        <begin position="571"/>
        <end position="579"/>
    </location>
</feature>
<feature type="turn" evidence="8">
    <location>
        <begin position="580"/>
        <end position="583"/>
    </location>
</feature>
<feature type="strand" evidence="8">
    <location>
        <begin position="586"/>
        <end position="592"/>
    </location>
</feature>
<comment type="function">
    <text evidence="4">Binds specifically to GTP-Rho. May function in a Rho pathway to limit stress fiber formation and/or increase the turnover of F-actin structures in the absence of high levels of RhoA activity.</text>
</comment>
<comment type="subunit">
    <text evidence="4 5">Interacts with GTP-bound RhoA and RhoB. Interacts with both GTP- and GDP-bound RhoA. According to PubMed:12473120, it does not interact with RhoA. Interacts with KRT18.</text>
</comment>
<comment type="subcellular location">
    <subcellularLocation>
        <location evidence="5">Cytoplasm</location>
        <location evidence="5">Perinuclear region</location>
    </subcellularLocation>
</comment>
<comment type="alternative products">
    <event type="alternative splicing"/>
    <isoform>
        <id>Q8IUC4-1</id>
        <name>1</name>
        <sequence type="displayed"/>
    </isoform>
    <isoform>
        <id>Q8IUC4-2</id>
        <name>2</name>
        <sequence type="described" ref="VSP_055548"/>
    </isoform>
</comment>
<comment type="tissue specificity">
    <text evidence="4 5">Widely expressed. Highly expressed in prostate, trachea, stomach, colon, thyroid and pancreas. Expressed at lower level in brain, spinal cord, kidney, placenta and liver.</text>
</comment>
<comment type="induction">
    <text evidence="5">By thyrotropin (TSH). Regulated by the cAMP pathway.</text>
</comment>
<comment type="similarity">
    <text evidence="7">Belongs to the RHPN family.</text>
</comment>
<evidence type="ECO:0000250" key="1">
    <source>
        <dbReference type="UniProtKB" id="Q8BWR8"/>
    </source>
</evidence>
<evidence type="ECO:0000255" key="2">
    <source>
        <dbReference type="PROSITE-ProRule" id="PRU00526"/>
    </source>
</evidence>
<evidence type="ECO:0000255" key="3">
    <source>
        <dbReference type="PROSITE-ProRule" id="PRU01207"/>
    </source>
</evidence>
<evidence type="ECO:0000269" key="4">
    <source>
    </source>
</evidence>
<evidence type="ECO:0000269" key="5">
    <source>
    </source>
</evidence>
<evidence type="ECO:0000303" key="6">
    <source>
    </source>
</evidence>
<evidence type="ECO:0000305" key="7"/>
<evidence type="ECO:0007829" key="8">
    <source>
        <dbReference type="PDB" id="2VSV"/>
    </source>
</evidence>
<reference key="1">
    <citation type="journal article" date="2002" name="Eur. J. Biochem.">
        <title>Identification and characterization of a novel activated RhoB binding protein containing a PDZ domain whose expression is specifically modulated in thyroid cells by cAMP.</title>
        <authorList>
            <person name="Mircescu H."/>
            <person name="Steuve S."/>
            <person name="Savonet V."/>
            <person name="Degraef C."/>
            <person name="Mellor H."/>
            <person name="Dumont J.E."/>
            <person name="Maenhaut C."/>
            <person name="Pirson I."/>
        </authorList>
    </citation>
    <scope>NUCLEOTIDE SEQUENCE [MRNA] (ISOFORM 1)</scope>
    <scope>SUBCELLULAR LOCATION</scope>
    <scope>TISSUE SPECIFICITY</scope>
    <scope>INDUCTION</scope>
    <scope>INTERACTION WITH RHOA AND KRT18</scope>
</reference>
<reference key="2">
    <citation type="journal article" date="2002" name="J. Biol. Chem.">
        <title>The RhoA-binding protein, rhophilin-2, regulates actin cytoskeleton organization.</title>
        <authorList>
            <person name="Peck J.W."/>
            <person name="Oberst M."/>
            <person name="Bouker K.B."/>
            <person name="Bowden E."/>
            <person name="Burbelo P.D."/>
        </authorList>
    </citation>
    <scope>NUCLEOTIDE SEQUENCE [MRNA] (ISOFORM 1)</scope>
    <scope>FUNCTION</scope>
    <scope>TISSUE SPECIFICITY</scope>
    <scope>INTERACTION WITH RHOA</scope>
    <scope>MUTAGENESIS OF 58-GLU-ASN-59; ARG-518 AND 526-LEU-GLY-527</scope>
    <scope>VARIANT GLN-70</scope>
    <source>
        <tissue>Kidney</tissue>
    </source>
</reference>
<reference key="3">
    <citation type="submission" date="2001-09" db="EMBL/GenBank/DDBJ databases">
        <authorList>
            <person name="Korkmaz K.S."/>
            <person name="Korkmaz C.G."/>
            <person name="Saatcioglu F."/>
        </authorList>
    </citation>
    <scope>NUCLEOTIDE SEQUENCE [MRNA] (ISOFORM 1)</scope>
</reference>
<reference key="4">
    <citation type="journal article" date="2004" name="Nat. Genet.">
        <title>Complete sequencing and characterization of 21,243 full-length human cDNAs.</title>
        <authorList>
            <person name="Ota T."/>
            <person name="Suzuki Y."/>
            <person name="Nishikawa T."/>
            <person name="Otsuki T."/>
            <person name="Sugiyama T."/>
            <person name="Irie R."/>
            <person name="Wakamatsu A."/>
            <person name="Hayashi K."/>
            <person name="Sato H."/>
            <person name="Nagai K."/>
            <person name="Kimura K."/>
            <person name="Makita H."/>
            <person name="Sekine M."/>
            <person name="Obayashi M."/>
            <person name="Nishi T."/>
            <person name="Shibahara T."/>
            <person name="Tanaka T."/>
            <person name="Ishii S."/>
            <person name="Yamamoto J."/>
            <person name="Saito K."/>
            <person name="Kawai Y."/>
            <person name="Isono Y."/>
            <person name="Nakamura Y."/>
            <person name="Nagahari K."/>
            <person name="Murakami K."/>
            <person name="Yasuda T."/>
            <person name="Iwayanagi T."/>
            <person name="Wagatsuma M."/>
            <person name="Shiratori A."/>
            <person name="Sudo H."/>
            <person name="Hosoiri T."/>
            <person name="Kaku Y."/>
            <person name="Kodaira H."/>
            <person name="Kondo H."/>
            <person name="Sugawara M."/>
            <person name="Takahashi M."/>
            <person name="Kanda K."/>
            <person name="Yokoi T."/>
            <person name="Furuya T."/>
            <person name="Kikkawa E."/>
            <person name="Omura Y."/>
            <person name="Abe K."/>
            <person name="Kamihara K."/>
            <person name="Katsuta N."/>
            <person name="Sato K."/>
            <person name="Tanikawa M."/>
            <person name="Yamazaki M."/>
            <person name="Ninomiya K."/>
            <person name="Ishibashi T."/>
            <person name="Yamashita H."/>
            <person name="Murakawa K."/>
            <person name="Fujimori K."/>
            <person name="Tanai H."/>
            <person name="Kimata M."/>
            <person name="Watanabe M."/>
            <person name="Hiraoka S."/>
            <person name="Chiba Y."/>
            <person name="Ishida S."/>
            <person name="Ono Y."/>
            <person name="Takiguchi S."/>
            <person name="Watanabe S."/>
            <person name="Yosida M."/>
            <person name="Hotuta T."/>
            <person name="Kusano J."/>
            <person name="Kanehori K."/>
            <person name="Takahashi-Fujii A."/>
            <person name="Hara H."/>
            <person name="Tanase T.-O."/>
            <person name="Nomura Y."/>
            <person name="Togiya S."/>
            <person name="Komai F."/>
            <person name="Hara R."/>
            <person name="Takeuchi K."/>
            <person name="Arita M."/>
            <person name="Imose N."/>
            <person name="Musashino K."/>
            <person name="Yuuki H."/>
            <person name="Oshima A."/>
            <person name="Sasaki N."/>
            <person name="Aotsuka S."/>
            <person name="Yoshikawa Y."/>
            <person name="Matsunawa H."/>
            <person name="Ichihara T."/>
            <person name="Shiohata N."/>
            <person name="Sano S."/>
            <person name="Moriya S."/>
            <person name="Momiyama H."/>
            <person name="Satoh N."/>
            <person name="Takami S."/>
            <person name="Terashima Y."/>
            <person name="Suzuki O."/>
            <person name="Nakagawa S."/>
            <person name="Senoh A."/>
            <person name="Mizoguchi H."/>
            <person name="Goto Y."/>
            <person name="Shimizu F."/>
            <person name="Wakebe H."/>
            <person name="Hishigaki H."/>
            <person name="Watanabe T."/>
            <person name="Sugiyama A."/>
            <person name="Takemoto M."/>
            <person name="Kawakami B."/>
            <person name="Yamazaki M."/>
            <person name="Watanabe K."/>
            <person name="Kumagai A."/>
            <person name="Itakura S."/>
            <person name="Fukuzumi Y."/>
            <person name="Fujimori Y."/>
            <person name="Komiyama M."/>
            <person name="Tashiro H."/>
            <person name="Tanigami A."/>
            <person name="Fujiwara T."/>
            <person name="Ono T."/>
            <person name="Yamada K."/>
            <person name="Fujii Y."/>
            <person name="Ozaki K."/>
            <person name="Hirao M."/>
            <person name="Ohmori Y."/>
            <person name="Kawabata A."/>
            <person name="Hikiji T."/>
            <person name="Kobatake N."/>
            <person name="Inagaki H."/>
            <person name="Ikema Y."/>
            <person name="Okamoto S."/>
            <person name="Okitani R."/>
            <person name="Kawakami T."/>
            <person name="Noguchi S."/>
            <person name="Itoh T."/>
            <person name="Shigeta K."/>
            <person name="Senba T."/>
            <person name="Matsumura K."/>
            <person name="Nakajima Y."/>
            <person name="Mizuno T."/>
            <person name="Morinaga M."/>
            <person name="Sasaki M."/>
            <person name="Togashi T."/>
            <person name="Oyama M."/>
            <person name="Hata H."/>
            <person name="Watanabe M."/>
            <person name="Komatsu T."/>
            <person name="Mizushima-Sugano J."/>
            <person name="Satoh T."/>
            <person name="Shirai Y."/>
            <person name="Takahashi Y."/>
            <person name="Nakagawa K."/>
            <person name="Okumura K."/>
            <person name="Nagase T."/>
            <person name="Nomura N."/>
            <person name="Kikuchi H."/>
            <person name="Masuho Y."/>
            <person name="Yamashita R."/>
            <person name="Nakai K."/>
            <person name="Yada T."/>
            <person name="Nakamura Y."/>
            <person name="Ohara O."/>
            <person name="Isogai T."/>
            <person name="Sugano S."/>
        </authorList>
    </citation>
    <scope>NUCLEOTIDE SEQUENCE [LARGE SCALE MRNA] (ISOFORMS 1 AND 2)</scope>
    <source>
        <tissue>Hippocampus</tissue>
        <tissue>Placenta</tissue>
        <tissue>Uterus</tissue>
    </source>
</reference>
<reference key="5">
    <citation type="journal article" date="2004" name="Nature">
        <title>The DNA sequence and biology of human chromosome 19.</title>
        <authorList>
            <person name="Grimwood J."/>
            <person name="Gordon L.A."/>
            <person name="Olsen A.S."/>
            <person name="Terry A."/>
            <person name="Schmutz J."/>
            <person name="Lamerdin J.E."/>
            <person name="Hellsten U."/>
            <person name="Goodstein D."/>
            <person name="Couronne O."/>
            <person name="Tran-Gyamfi M."/>
            <person name="Aerts A."/>
            <person name="Altherr M."/>
            <person name="Ashworth L."/>
            <person name="Bajorek E."/>
            <person name="Black S."/>
            <person name="Branscomb E."/>
            <person name="Caenepeel S."/>
            <person name="Carrano A.V."/>
            <person name="Caoile C."/>
            <person name="Chan Y.M."/>
            <person name="Christensen M."/>
            <person name="Cleland C.A."/>
            <person name="Copeland A."/>
            <person name="Dalin E."/>
            <person name="Dehal P."/>
            <person name="Denys M."/>
            <person name="Detter J.C."/>
            <person name="Escobar J."/>
            <person name="Flowers D."/>
            <person name="Fotopulos D."/>
            <person name="Garcia C."/>
            <person name="Georgescu A.M."/>
            <person name="Glavina T."/>
            <person name="Gomez M."/>
            <person name="Gonzales E."/>
            <person name="Groza M."/>
            <person name="Hammon N."/>
            <person name="Hawkins T."/>
            <person name="Haydu L."/>
            <person name="Ho I."/>
            <person name="Huang W."/>
            <person name="Israni S."/>
            <person name="Jett J."/>
            <person name="Kadner K."/>
            <person name="Kimball H."/>
            <person name="Kobayashi A."/>
            <person name="Larionov V."/>
            <person name="Leem S.-H."/>
            <person name="Lopez F."/>
            <person name="Lou Y."/>
            <person name="Lowry S."/>
            <person name="Malfatti S."/>
            <person name="Martinez D."/>
            <person name="McCready P.M."/>
            <person name="Medina C."/>
            <person name="Morgan J."/>
            <person name="Nelson K."/>
            <person name="Nolan M."/>
            <person name="Ovcharenko I."/>
            <person name="Pitluck S."/>
            <person name="Pollard M."/>
            <person name="Popkie A.P."/>
            <person name="Predki P."/>
            <person name="Quan G."/>
            <person name="Ramirez L."/>
            <person name="Rash S."/>
            <person name="Retterer J."/>
            <person name="Rodriguez A."/>
            <person name="Rogers S."/>
            <person name="Salamov A."/>
            <person name="Salazar A."/>
            <person name="She X."/>
            <person name="Smith D."/>
            <person name="Slezak T."/>
            <person name="Solovyev V."/>
            <person name="Thayer N."/>
            <person name="Tice H."/>
            <person name="Tsai M."/>
            <person name="Ustaszewska A."/>
            <person name="Vo N."/>
            <person name="Wagner M."/>
            <person name="Wheeler J."/>
            <person name="Wu K."/>
            <person name="Xie G."/>
            <person name="Yang J."/>
            <person name="Dubchak I."/>
            <person name="Furey T.S."/>
            <person name="DeJong P."/>
            <person name="Dickson M."/>
            <person name="Gordon D."/>
            <person name="Eichler E.E."/>
            <person name="Pennacchio L.A."/>
            <person name="Richardson P."/>
            <person name="Stubbs L."/>
            <person name="Rokhsar D.S."/>
            <person name="Myers R.M."/>
            <person name="Rubin E.M."/>
            <person name="Lucas S.M."/>
        </authorList>
    </citation>
    <scope>NUCLEOTIDE SEQUENCE [LARGE SCALE GENOMIC DNA]</scope>
</reference>
<reference key="6">
    <citation type="journal article" date="2004" name="Genome Res.">
        <title>The status, quality, and expansion of the NIH full-length cDNA project: the Mammalian Gene Collection (MGC).</title>
        <authorList>
            <consortium name="The MGC Project Team"/>
        </authorList>
    </citation>
    <scope>NUCLEOTIDE SEQUENCE [LARGE SCALE MRNA] (ISOFORM 1)</scope>
    <source>
        <tissue>Testis</tissue>
    </source>
</reference>
<reference key="7">
    <citation type="journal article" date="2007" name="BMC Genomics">
        <title>The full-ORF clone resource of the German cDNA consortium.</title>
        <authorList>
            <person name="Bechtel S."/>
            <person name="Rosenfelder H."/>
            <person name="Duda A."/>
            <person name="Schmidt C.P."/>
            <person name="Ernst U."/>
            <person name="Wellenreuther R."/>
            <person name="Mehrle A."/>
            <person name="Schuster C."/>
            <person name="Bahr A."/>
            <person name="Bloecker H."/>
            <person name="Heubner D."/>
            <person name="Hoerlein A."/>
            <person name="Michel G."/>
            <person name="Wedler H."/>
            <person name="Koehrer K."/>
            <person name="Ottenwaelder B."/>
            <person name="Poustka A."/>
            <person name="Wiemann S."/>
            <person name="Schupp I."/>
        </authorList>
    </citation>
    <scope>NUCLEOTIDE SEQUENCE [LARGE SCALE MRNA] OF 30-686 (ISOFORM 1)</scope>
    <source>
        <tissue>Amygdala</tissue>
    </source>
</reference>
<reference key="8">
    <citation type="journal article" date="2014" name="J. Proteomics">
        <title>An enzyme assisted RP-RPLC approach for in-depth analysis of human liver phosphoproteome.</title>
        <authorList>
            <person name="Bian Y."/>
            <person name="Song C."/>
            <person name="Cheng K."/>
            <person name="Dong M."/>
            <person name="Wang F."/>
            <person name="Huang J."/>
            <person name="Sun D."/>
            <person name="Wang L."/>
            <person name="Ye M."/>
            <person name="Zou H."/>
        </authorList>
    </citation>
    <scope>IDENTIFICATION BY MASS SPECTROMETRY [LARGE SCALE ANALYSIS]</scope>
    <source>
        <tissue>Liver</tissue>
    </source>
</reference>
<reference key="9">
    <citation type="submission" date="2009-02" db="PDB data bank">
        <title>Crystal structure of the PDZ domain of human rhophilin-2.</title>
        <authorList>
            <consortium name="Structural genomics consortium (SGC)"/>
        </authorList>
    </citation>
    <scope>X-RAY CRYSTALLOGRAPHY (1.82 ANGSTROMS) OF 514-595</scope>
</reference>